<proteinExistence type="inferred from homology"/>
<reference key="1">
    <citation type="journal article" date="2003" name="Nature">
        <title>The genome sequence of the filamentous fungus Neurospora crassa.</title>
        <authorList>
            <person name="Galagan J.E."/>
            <person name="Calvo S.E."/>
            <person name="Borkovich K.A."/>
            <person name="Selker E.U."/>
            <person name="Read N.D."/>
            <person name="Jaffe D.B."/>
            <person name="FitzHugh W."/>
            <person name="Ma L.-J."/>
            <person name="Smirnov S."/>
            <person name="Purcell S."/>
            <person name="Rehman B."/>
            <person name="Elkins T."/>
            <person name="Engels R."/>
            <person name="Wang S."/>
            <person name="Nielsen C.B."/>
            <person name="Butler J."/>
            <person name="Endrizzi M."/>
            <person name="Qui D."/>
            <person name="Ianakiev P."/>
            <person name="Bell-Pedersen D."/>
            <person name="Nelson M.A."/>
            <person name="Werner-Washburne M."/>
            <person name="Selitrennikoff C.P."/>
            <person name="Kinsey J.A."/>
            <person name="Braun E.L."/>
            <person name="Zelter A."/>
            <person name="Schulte U."/>
            <person name="Kothe G.O."/>
            <person name="Jedd G."/>
            <person name="Mewes H.-W."/>
            <person name="Staben C."/>
            <person name="Marcotte E."/>
            <person name="Greenberg D."/>
            <person name="Roy A."/>
            <person name="Foley K."/>
            <person name="Naylor J."/>
            <person name="Stange-Thomann N."/>
            <person name="Barrett R."/>
            <person name="Gnerre S."/>
            <person name="Kamal M."/>
            <person name="Kamvysselis M."/>
            <person name="Mauceli E.W."/>
            <person name="Bielke C."/>
            <person name="Rudd S."/>
            <person name="Frishman D."/>
            <person name="Krystofova S."/>
            <person name="Rasmussen C."/>
            <person name="Metzenberg R.L."/>
            <person name="Perkins D.D."/>
            <person name="Kroken S."/>
            <person name="Cogoni C."/>
            <person name="Macino G."/>
            <person name="Catcheside D.E.A."/>
            <person name="Li W."/>
            <person name="Pratt R.J."/>
            <person name="Osmani S.A."/>
            <person name="DeSouza C.P.C."/>
            <person name="Glass N.L."/>
            <person name="Orbach M.J."/>
            <person name="Berglund J.A."/>
            <person name="Voelker R."/>
            <person name="Yarden O."/>
            <person name="Plamann M."/>
            <person name="Seiler S."/>
            <person name="Dunlap J.C."/>
            <person name="Radford A."/>
            <person name="Aramayo R."/>
            <person name="Natvig D.O."/>
            <person name="Alex L.A."/>
            <person name="Mannhaupt G."/>
            <person name="Ebbole D.J."/>
            <person name="Freitag M."/>
            <person name="Paulsen I."/>
            <person name="Sachs M.S."/>
            <person name="Lander E.S."/>
            <person name="Nusbaum C."/>
            <person name="Birren B.W."/>
        </authorList>
    </citation>
    <scope>NUCLEOTIDE SEQUENCE [LARGE SCALE GENOMIC DNA]</scope>
    <source>
        <strain>ATCC 24698 / 74-OR23-1A / CBS 708.71 / DSM 1257 / FGSC 987</strain>
    </source>
</reference>
<comment type="function">
    <text evidence="1">Component of the PAN1 actin cytoskeleton-regulatory complex required for the internalization of endosomes during actin-coupled endocytosis. The complex links the site of endocytosis to the cell membrane-associated actin cytoskeleton. Mediates uptake of external molecules and vacuolar degradation of plasma membrane proteins. Plays a role in the proper organization of the cell membrane-associated actin cytoskeleton and promotes its destabilization (By similarity).</text>
</comment>
<comment type="subunit">
    <text evidence="1">Component of the PAN1 actin cytoskeleton-regulatory complex.</text>
</comment>
<comment type="subcellular location">
    <subcellularLocation>
        <location evidence="1">Cell membrane</location>
        <topology evidence="1">Peripheral membrane protein</topology>
        <orientation evidence="1">Cytoplasmic side</orientation>
    </subcellularLocation>
    <subcellularLocation>
        <location evidence="1">Endosome membrane</location>
        <topology evidence="1">Peripheral membrane protein</topology>
        <orientation evidence="1">Cytoplasmic side</orientation>
    </subcellularLocation>
    <subcellularLocation>
        <location evidence="1">Cytoplasm</location>
        <location evidence="1">Cytoskeleton</location>
        <location evidence="1">Actin patch</location>
    </subcellularLocation>
    <text evidence="1">Cytoplasmic and cortical actin patches.</text>
</comment>
<comment type="similarity">
    <text evidence="6">Belongs to the PAN1 family.</text>
</comment>
<accession>Q7SAT8</accession>
<feature type="chain" id="PRO_0000349481" description="Actin cytoskeleton-regulatory complex protein pan-1">
    <location>
        <begin position="1"/>
        <end position="1533"/>
    </location>
</feature>
<feature type="domain" description="EH 1" evidence="3">
    <location>
        <begin position="244"/>
        <end position="333"/>
    </location>
</feature>
<feature type="domain" description="EF-hand 1" evidence="4">
    <location>
        <begin position="277"/>
        <end position="312"/>
    </location>
</feature>
<feature type="domain" description="EH 2" evidence="3">
    <location>
        <begin position="513"/>
        <end position="602"/>
    </location>
</feature>
<feature type="domain" description="EF-hand 2" evidence="4">
    <location>
        <begin position="546"/>
        <end position="581"/>
    </location>
</feature>
<feature type="domain" description="WH2">
    <location>
        <begin position="1500"/>
        <end position="1517"/>
    </location>
</feature>
<feature type="region of interest" description="Disordered" evidence="5">
    <location>
        <begin position="1"/>
        <end position="204"/>
    </location>
</feature>
<feature type="region of interest" description="Disordered" evidence="5">
    <location>
        <begin position="345"/>
        <end position="378"/>
    </location>
</feature>
<feature type="region of interest" description="Disordered" evidence="5">
    <location>
        <begin position="393"/>
        <end position="423"/>
    </location>
</feature>
<feature type="region of interest" description="Disordered" evidence="5">
    <location>
        <begin position="649"/>
        <end position="691"/>
    </location>
</feature>
<feature type="region of interest" description="Disordered" evidence="5">
    <location>
        <begin position="894"/>
        <end position="917"/>
    </location>
</feature>
<feature type="region of interest" description="Disordered" evidence="5">
    <location>
        <begin position="935"/>
        <end position="1306"/>
    </location>
</feature>
<feature type="region of interest" description="Disordered" evidence="5">
    <location>
        <begin position="1334"/>
        <end position="1533"/>
    </location>
</feature>
<feature type="coiled-coil region" evidence="2">
    <location>
        <begin position="690"/>
        <end position="890"/>
    </location>
</feature>
<feature type="coiled-coil region" evidence="2">
    <location>
        <begin position="1026"/>
        <end position="1209"/>
    </location>
</feature>
<feature type="compositionally biased region" description="Low complexity" evidence="5">
    <location>
        <begin position="19"/>
        <end position="46"/>
    </location>
</feature>
<feature type="compositionally biased region" description="Low complexity" evidence="5">
    <location>
        <begin position="53"/>
        <end position="136"/>
    </location>
</feature>
<feature type="compositionally biased region" description="Low complexity" evidence="5">
    <location>
        <begin position="143"/>
        <end position="170"/>
    </location>
</feature>
<feature type="compositionally biased region" description="Low complexity" evidence="5">
    <location>
        <begin position="177"/>
        <end position="193"/>
    </location>
</feature>
<feature type="compositionally biased region" description="Low complexity" evidence="5">
    <location>
        <begin position="345"/>
        <end position="359"/>
    </location>
</feature>
<feature type="compositionally biased region" description="Polar residues" evidence="5">
    <location>
        <begin position="360"/>
        <end position="378"/>
    </location>
</feature>
<feature type="compositionally biased region" description="Polar residues" evidence="5">
    <location>
        <begin position="393"/>
        <end position="410"/>
    </location>
</feature>
<feature type="compositionally biased region" description="Basic and acidic residues" evidence="5">
    <location>
        <begin position="649"/>
        <end position="664"/>
    </location>
</feature>
<feature type="compositionally biased region" description="Basic and acidic residues" evidence="5">
    <location>
        <begin position="894"/>
        <end position="916"/>
    </location>
</feature>
<feature type="compositionally biased region" description="Basic and acidic residues" evidence="5">
    <location>
        <begin position="935"/>
        <end position="947"/>
    </location>
</feature>
<feature type="compositionally biased region" description="Low complexity" evidence="5">
    <location>
        <begin position="968"/>
        <end position="982"/>
    </location>
</feature>
<feature type="compositionally biased region" description="Basic and acidic residues" evidence="5">
    <location>
        <begin position="1031"/>
        <end position="1063"/>
    </location>
</feature>
<feature type="compositionally biased region" description="Basic and acidic residues" evidence="5">
    <location>
        <begin position="1090"/>
        <end position="1164"/>
    </location>
</feature>
<feature type="compositionally biased region" description="Basic and acidic residues" evidence="5">
    <location>
        <begin position="1173"/>
        <end position="1203"/>
    </location>
</feature>
<feature type="compositionally biased region" description="Acidic residues" evidence="5">
    <location>
        <begin position="1204"/>
        <end position="1218"/>
    </location>
</feature>
<feature type="compositionally biased region" description="Polar residues" evidence="5">
    <location>
        <begin position="1221"/>
        <end position="1237"/>
    </location>
</feature>
<feature type="compositionally biased region" description="Low complexity" evidence="5">
    <location>
        <begin position="1279"/>
        <end position="1293"/>
    </location>
</feature>
<feature type="compositionally biased region" description="Acidic residues" evidence="5">
    <location>
        <begin position="1348"/>
        <end position="1367"/>
    </location>
</feature>
<feature type="compositionally biased region" description="Pro residues" evidence="5">
    <location>
        <begin position="1412"/>
        <end position="1495"/>
    </location>
</feature>
<sequence>MYSNSNAFLGGANSLRPGQQPQQQQQQYGAPSPFGQQGPMQPQPTGFAPQPTGFAPQPTGFGQQQTGYGQQQQQPLQQQFTGYPGLQAPQQQPQLQQQFTGFQPQATGFQPQVTGFQPQATGFQPQAPQQQPFQTGMPPVPAIPQQFQQQQSFQQQQQQQQQPSIQQPQPTGFPSVQIQAPAQQPAPTAQGGIAPPPPVKPQATGFSEMAASFQTAGGKGRRAEQKTNTVKIPNIRLSFITAHDQARFETLFKSAVGEGQTTMSGEKARDLLLRSKLDGDSLSQIWTLADTTRSGQLHFPEFALAMYLCNLKITGKALPSVLPDHIKNEVSSMVDIINFSITDDAGSSSAPASNAPSFATQQNTAAVPTIQQPQPQPSNSAILQAQMTGFPAQQTGFMGQNQGLQPQQTGFPGMNPQPTGYAGPMPPMPPMPTGFGSNLSPNAGPGGMVAPLNSQPTGMPGQWGLVNTPATGLPLIDALQARMMPQLGREQRNYTTAGLQGNAVIPWAITKDEKTRYDALFRAWDGLNKGFIAGDAAIEIFGQSGLDKPDLERIWTLADNGNKGRLDLDEFAVAMHLIYRKLNGYPIPNQLPPELVPPSARNLSASIGMVKNMLHQESELRKNTGASLLPQKTGVSYLKGHSFKNTGANRKDATVFKNNDEEVGYRSSARRRVGTSPRPESPAASNSGDDLTIEQLRKKIKEKQVLLDAMDFNDEKNMEEDDILDRRDRREADELYRRIRRIQEDIDNHPDAQLMSADSDAERRALKRQLQQLTDRIPELASQVRKTEKAIADARLELFRLKDAKAHPNSAAAIVGTGPGGMVTESDRIKARAKAMMQQRTAALMGKKIDIGDDDADGPKRLEEENIKIKTEKENNERMVRDVEDSVREFAKGIEDSLKEGAPDSTSEHEKRRWEDALGVEDEVRDFIFDLQRESRAARIRSQDRQGGRKATQEPVKAEAPVSTRVETPSPSISRTSTPASTAGGGSYSSYKTPEERAAFIKQQAEQRMAERLAALGLKAPGKPGETAAQRAERERAERAEKRRQAEEEDARREAERQAKLAEEEGGPAPVASPKADSRPPPPPPSRKAGKADDRRDEEAAAKKAEEERLEREREEQERETRELEESAKAQEDELAKERAEADARLKALEEQVRLGKLKKEEEKRKKKAAMAEAKEKEAQLAARRAEIEAARKREEELRKQLEAIDDEDSSSSDEEGPEQITPQASTPTVGGSQVGTHEQEPNSPPPPAPASVASPPQIVTTSPNAERESRNPYFKMMSQSSEASTSSVAAPVASPPPPADVSTNPFHRMTQAAAAPAAAVSSAVSGAVSGISDAISGVMPSRRRPNDDDDDDWGSEKGSDDEDSDDEGRPGGNSAAALASILFGTMAPPRPLSATGEKPTASTPPVVSSPSSPPPPPAPVEPSAGSPPPPPPPPPGPPPAPSGGAPPPPPPPPPMPESGAPAAPPPPPPPGPPPAPGAVPPPPPPPPGGAPAPSLPAGRPAGLLGEIQAGRALKKTQTKDKSQAAVAGRVLD</sequence>
<keyword id="KW-0009">Actin-binding</keyword>
<keyword id="KW-1003">Cell membrane</keyword>
<keyword id="KW-0175">Coiled coil</keyword>
<keyword id="KW-0963">Cytoplasm</keyword>
<keyword id="KW-0206">Cytoskeleton</keyword>
<keyword id="KW-0254">Endocytosis</keyword>
<keyword id="KW-0967">Endosome</keyword>
<keyword id="KW-0472">Membrane</keyword>
<keyword id="KW-1185">Reference proteome</keyword>
<keyword id="KW-0677">Repeat</keyword>
<dbReference type="EMBL" id="CM002238">
    <property type="protein sequence ID" value="EAA33504.1"/>
    <property type="molecule type" value="Genomic_DNA"/>
</dbReference>
<dbReference type="RefSeq" id="XP_962740.1">
    <property type="nucleotide sequence ID" value="XM_957647.2"/>
</dbReference>
<dbReference type="SMR" id="Q7SAT8"/>
<dbReference type="FunCoup" id="Q7SAT8">
    <property type="interactions" value="56"/>
</dbReference>
<dbReference type="STRING" id="367110.Q7SAT8"/>
<dbReference type="PaxDb" id="5141-EFNCRP00000005956"/>
<dbReference type="EnsemblFungi" id="EAA33504">
    <property type="protein sequence ID" value="EAA33504"/>
    <property type="gene ID" value="NCU06171"/>
</dbReference>
<dbReference type="GeneID" id="3878888"/>
<dbReference type="KEGG" id="ncr:NCU06171"/>
<dbReference type="VEuPathDB" id="FungiDB:NCU06171"/>
<dbReference type="HOGENOM" id="CLU_001963_1_0_1"/>
<dbReference type="InParanoid" id="Q7SAT8"/>
<dbReference type="OMA" id="GMPGQWG"/>
<dbReference type="OrthoDB" id="2015333at2759"/>
<dbReference type="Proteomes" id="UP000001805">
    <property type="component" value="Chromosome 3, Linkage Group III"/>
</dbReference>
<dbReference type="GO" id="GO:0030479">
    <property type="term" value="C:actin cortical patch"/>
    <property type="evidence" value="ECO:0007669"/>
    <property type="project" value="UniProtKB-SubCell"/>
</dbReference>
<dbReference type="GO" id="GO:0005737">
    <property type="term" value="C:cytoplasm"/>
    <property type="evidence" value="ECO:0000318"/>
    <property type="project" value="GO_Central"/>
</dbReference>
<dbReference type="GO" id="GO:0010008">
    <property type="term" value="C:endosome membrane"/>
    <property type="evidence" value="ECO:0007669"/>
    <property type="project" value="UniProtKB-SubCell"/>
</dbReference>
<dbReference type="GO" id="GO:0005886">
    <property type="term" value="C:plasma membrane"/>
    <property type="evidence" value="ECO:0000318"/>
    <property type="project" value="GO_Central"/>
</dbReference>
<dbReference type="GO" id="GO:0003779">
    <property type="term" value="F:actin binding"/>
    <property type="evidence" value="ECO:0007669"/>
    <property type="project" value="UniProtKB-KW"/>
</dbReference>
<dbReference type="GO" id="GO:0005509">
    <property type="term" value="F:calcium ion binding"/>
    <property type="evidence" value="ECO:0007669"/>
    <property type="project" value="InterPro"/>
</dbReference>
<dbReference type="GO" id="GO:0006897">
    <property type="term" value="P:endocytosis"/>
    <property type="evidence" value="ECO:0000318"/>
    <property type="project" value="GO_Central"/>
</dbReference>
<dbReference type="GO" id="GO:0016197">
    <property type="term" value="P:endosomal transport"/>
    <property type="evidence" value="ECO:0000318"/>
    <property type="project" value="GO_Central"/>
</dbReference>
<dbReference type="CDD" id="cd00052">
    <property type="entry name" value="EH"/>
    <property type="match status" value="2"/>
</dbReference>
<dbReference type="FunFam" id="1.10.238.10:FF:000349">
    <property type="entry name" value="Actin cytoskeleton-regulatory complex protein PAN1"/>
    <property type="match status" value="1"/>
</dbReference>
<dbReference type="Gene3D" id="1.10.238.10">
    <property type="entry name" value="EF-hand"/>
    <property type="match status" value="2"/>
</dbReference>
<dbReference type="InterPro" id="IPR013182">
    <property type="entry name" value="DUF1720"/>
</dbReference>
<dbReference type="InterPro" id="IPR011992">
    <property type="entry name" value="EF-hand-dom_pair"/>
</dbReference>
<dbReference type="InterPro" id="IPR002048">
    <property type="entry name" value="EF_hand_dom"/>
</dbReference>
<dbReference type="InterPro" id="IPR000261">
    <property type="entry name" value="EH_dom"/>
</dbReference>
<dbReference type="PANTHER" id="PTHR11216">
    <property type="entry name" value="EH DOMAIN"/>
    <property type="match status" value="1"/>
</dbReference>
<dbReference type="PANTHER" id="PTHR11216:SF174">
    <property type="entry name" value="GH06923P"/>
    <property type="match status" value="1"/>
</dbReference>
<dbReference type="Pfam" id="PF08226">
    <property type="entry name" value="DUF1720"/>
    <property type="match status" value="1"/>
</dbReference>
<dbReference type="Pfam" id="PF12763">
    <property type="entry name" value="EH"/>
    <property type="match status" value="2"/>
</dbReference>
<dbReference type="PRINTS" id="PR01217">
    <property type="entry name" value="PRICHEXTENSN"/>
</dbReference>
<dbReference type="SMART" id="SM00054">
    <property type="entry name" value="EFh"/>
    <property type="match status" value="2"/>
</dbReference>
<dbReference type="SMART" id="SM00027">
    <property type="entry name" value="EH"/>
    <property type="match status" value="2"/>
</dbReference>
<dbReference type="SUPFAM" id="SSF47473">
    <property type="entry name" value="EF-hand"/>
    <property type="match status" value="2"/>
</dbReference>
<dbReference type="PROSITE" id="PS00018">
    <property type="entry name" value="EF_HAND_1"/>
    <property type="match status" value="1"/>
</dbReference>
<dbReference type="PROSITE" id="PS50222">
    <property type="entry name" value="EF_HAND_2"/>
    <property type="match status" value="2"/>
</dbReference>
<dbReference type="PROSITE" id="PS50031">
    <property type="entry name" value="EH"/>
    <property type="match status" value="2"/>
</dbReference>
<evidence type="ECO:0000250" key="1"/>
<evidence type="ECO:0000255" key="2"/>
<evidence type="ECO:0000255" key="3">
    <source>
        <dbReference type="PROSITE-ProRule" id="PRU00077"/>
    </source>
</evidence>
<evidence type="ECO:0000255" key="4">
    <source>
        <dbReference type="PROSITE-ProRule" id="PRU00448"/>
    </source>
</evidence>
<evidence type="ECO:0000256" key="5">
    <source>
        <dbReference type="SAM" id="MobiDB-lite"/>
    </source>
</evidence>
<evidence type="ECO:0000305" key="6"/>
<organism>
    <name type="scientific">Neurospora crassa (strain ATCC 24698 / 74-OR23-1A / CBS 708.71 / DSM 1257 / FGSC 987)</name>
    <dbReference type="NCBI Taxonomy" id="367110"/>
    <lineage>
        <taxon>Eukaryota</taxon>
        <taxon>Fungi</taxon>
        <taxon>Dikarya</taxon>
        <taxon>Ascomycota</taxon>
        <taxon>Pezizomycotina</taxon>
        <taxon>Sordariomycetes</taxon>
        <taxon>Sordariomycetidae</taxon>
        <taxon>Sordariales</taxon>
        <taxon>Sordariaceae</taxon>
        <taxon>Neurospora</taxon>
    </lineage>
</organism>
<name>PAN1_NEUCR</name>
<protein>
    <recommendedName>
        <fullName>Actin cytoskeleton-regulatory complex protein pan-1</fullName>
    </recommendedName>
</protein>
<gene>
    <name type="primary">pan-1</name>
    <name type="ORF">NCU06171</name>
</gene>